<reference key="1">
    <citation type="journal article" date="1990" name="Curr. Genet.">
        <title>Structure of the rubisco operon from the multicellular red alga Antithamnion spec.</title>
        <authorList>
            <person name="Kostrzewa M."/>
            <person name="Valentin K.-U."/>
            <person name="Maid U."/>
            <person name="Radetzky R."/>
            <person name="Zetsche K."/>
        </authorList>
    </citation>
    <scope>NUCLEOTIDE SEQUENCE [GENOMIC DNA]</scope>
</reference>
<dbReference type="EMBL" id="X54532">
    <property type="protein sequence ID" value="CAA38399.1"/>
    <property type="molecule type" value="Genomic_DNA"/>
</dbReference>
<dbReference type="PIR" id="S14155">
    <property type="entry name" value="RKKKSA"/>
</dbReference>
<dbReference type="SMR" id="P25458"/>
<dbReference type="GO" id="GO:0009507">
    <property type="term" value="C:chloroplast"/>
    <property type="evidence" value="ECO:0007669"/>
    <property type="project" value="UniProtKB-SubCell"/>
</dbReference>
<dbReference type="GO" id="GO:0016984">
    <property type="term" value="F:ribulose-bisphosphate carboxylase activity"/>
    <property type="evidence" value="ECO:0007669"/>
    <property type="project" value="UniProtKB-UniRule"/>
</dbReference>
<dbReference type="GO" id="GO:0019253">
    <property type="term" value="P:reductive pentose-phosphate cycle"/>
    <property type="evidence" value="ECO:0007669"/>
    <property type="project" value="UniProtKB-UniRule"/>
</dbReference>
<dbReference type="CDD" id="cd03527">
    <property type="entry name" value="RuBisCO_small"/>
    <property type="match status" value="1"/>
</dbReference>
<dbReference type="Gene3D" id="3.30.190.10">
    <property type="entry name" value="Ribulose bisphosphate carboxylase, small subunit"/>
    <property type="match status" value="1"/>
</dbReference>
<dbReference type="HAMAP" id="MF_00859">
    <property type="entry name" value="RuBisCO_S_bact"/>
    <property type="match status" value="1"/>
</dbReference>
<dbReference type="InterPro" id="IPR024681">
    <property type="entry name" value="RuBisCO_ssu"/>
</dbReference>
<dbReference type="InterPro" id="IPR000894">
    <property type="entry name" value="RuBisCO_ssu_dom"/>
</dbReference>
<dbReference type="InterPro" id="IPR036385">
    <property type="entry name" value="RuBisCO_ssu_sf"/>
</dbReference>
<dbReference type="PANTHER" id="PTHR31262">
    <property type="entry name" value="RIBULOSE BISPHOSPHATE CARBOXYLASE SMALL CHAIN 1, CHLOROPLASTIC"/>
    <property type="match status" value="1"/>
</dbReference>
<dbReference type="PANTHER" id="PTHR31262:SF23">
    <property type="entry name" value="RIBULOSE BISPHOSPHATE CARBOXYLASE SMALL SUBUNIT"/>
    <property type="match status" value="1"/>
</dbReference>
<dbReference type="Pfam" id="PF00101">
    <property type="entry name" value="RuBisCO_small"/>
    <property type="match status" value="1"/>
</dbReference>
<dbReference type="SMART" id="SM00961">
    <property type="entry name" value="RuBisCO_small"/>
    <property type="match status" value="1"/>
</dbReference>
<dbReference type="SUPFAM" id="SSF55239">
    <property type="entry name" value="RuBisCO, small subunit"/>
    <property type="match status" value="1"/>
</dbReference>
<organism>
    <name type="scientific">Antithamnion sp.</name>
    <name type="common">Red alga</name>
    <dbReference type="NCBI Taxonomy" id="2767"/>
    <lineage>
        <taxon>Eukaryota</taxon>
        <taxon>Rhodophyta</taxon>
        <taxon>Florideophyceae</taxon>
        <taxon>Rhodymeniophycidae</taxon>
        <taxon>Ceramiales</taxon>
        <taxon>Ceramiaceae</taxon>
        <taxon>Antithamnion</taxon>
    </lineage>
</organism>
<sequence length="138" mass="16143">MRLTQGTFSFLPDLTDEQIKKQIAYAVSQNWAINIEFTDDPHPRNNYWELWGLPLFDINDVESVMYELESCRKQHSGLYIKINAFDNTRGVESCVLSFIINRPSYEPGFELIRSEDIGRNQKYSFRSYATAKPEGSRY</sequence>
<name>RBS_ANTSP</name>
<proteinExistence type="inferred from homology"/>
<accession>P25458</accession>
<geneLocation type="chloroplast"/>
<comment type="function">
    <text evidence="1">RuBisCO catalyzes two reactions: the carboxylation of D-ribulose 1,5-bisphosphate, the primary event in carbon dioxide fixation, as well as the oxidative fragmentation of the pentose substrate in the photorespiration process. Both reactions occur simultaneously and in competition at the same active site. Although the small subunit is not catalytic it is essential for maximal activity.</text>
</comment>
<comment type="subunit">
    <text evidence="1">Heterohexadecamer of 8 large and 8 small subunits.</text>
</comment>
<comment type="subcellular location">
    <subcellularLocation>
        <location evidence="1">Plastid</location>
        <location evidence="1">Chloroplast</location>
    </subcellularLocation>
</comment>
<comment type="miscellaneous">
    <text>In this alga, in contrast to plants, the small subunit is encoded in the chloroplast.</text>
</comment>
<comment type="miscellaneous">
    <text evidence="1">The basic functional RuBisCO is composed of a large chain homodimer in a 'head-to-tail' conformation. In form I RuBisCO this homodimer is arranged in a barrel-like tetramer with the small subunits forming a tetrameric 'cap' on each end of the 'barrel'.</text>
</comment>
<comment type="similarity">
    <text evidence="1">Belongs to the RuBisCO small chain family.</text>
</comment>
<keyword id="KW-0113">Calvin cycle</keyword>
<keyword id="KW-0120">Carbon dioxide fixation</keyword>
<keyword id="KW-0150">Chloroplast</keyword>
<keyword id="KW-0601">Photorespiration</keyword>
<keyword id="KW-0602">Photosynthesis</keyword>
<keyword id="KW-0934">Plastid</keyword>
<feature type="chain" id="PRO_0000198591" description="Ribulose bisphosphate carboxylase small subunit">
    <location>
        <begin position="1"/>
        <end position="138"/>
    </location>
</feature>
<evidence type="ECO:0000255" key="1">
    <source>
        <dbReference type="HAMAP-Rule" id="MF_00859"/>
    </source>
</evidence>
<gene>
    <name evidence="1" type="primary">rbcS</name>
</gene>
<protein>
    <recommendedName>
        <fullName evidence="1">Ribulose bisphosphate carboxylase small subunit</fullName>
        <shortName evidence="1">RuBisCO small subunit</shortName>
    </recommendedName>
</protein>